<dbReference type="EMBL" id="AF226054">
    <property type="protein sequence ID" value="AAF86954.1"/>
    <property type="molecule type" value="mRNA"/>
</dbReference>
<dbReference type="EMBL" id="AK027786">
    <property type="protein sequence ID" value="BAB55367.1"/>
    <property type="molecule type" value="mRNA"/>
</dbReference>
<dbReference type="EMBL" id="AK027844">
    <property type="protein sequence ID" value="BAB55407.1"/>
    <property type="molecule type" value="mRNA"/>
</dbReference>
<dbReference type="EMBL" id="AK075387">
    <property type="protein sequence ID" value="BAC11587.1"/>
    <property type="molecule type" value="mRNA"/>
</dbReference>
<dbReference type="EMBL" id="AK314328">
    <property type="protein sequence ID" value="BAG36975.1"/>
    <property type="molecule type" value="mRNA"/>
</dbReference>
<dbReference type="EMBL" id="CH471109">
    <property type="protein sequence ID" value="EAW94279.1"/>
    <property type="molecule type" value="Genomic_DNA"/>
</dbReference>
<dbReference type="EMBL" id="CH471109">
    <property type="protein sequence ID" value="EAW94281.1"/>
    <property type="molecule type" value="Genomic_DNA"/>
</dbReference>
<dbReference type="EMBL" id="CH471109">
    <property type="protein sequence ID" value="EAW94282.1"/>
    <property type="molecule type" value="Genomic_DNA"/>
</dbReference>
<dbReference type="EMBL" id="BC008905">
    <property type="protein sequence ID" value="AAH08905.1"/>
    <property type="molecule type" value="mRNA"/>
</dbReference>
<dbReference type="EMBL" id="BC013600">
    <property type="protein sequence ID" value="AAH13600.2"/>
    <property type="molecule type" value="mRNA"/>
</dbReference>
<dbReference type="EMBL" id="AF113221">
    <property type="protein sequence ID" value="AAG39292.1"/>
    <property type="status" value="ALT_FRAME"/>
    <property type="molecule type" value="mRNA"/>
</dbReference>
<dbReference type="CCDS" id="CCDS11643.1">
    <molecule id="Q96A33-1"/>
</dbReference>
<dbReference type="RefSeq" id="NP_064583.2">
    <molecule id="Q96A33-1"/>
    <property type="nucleotide sequence ID" value="NM_020198.3"/>
</dbReference>
<dbReference type="RefSeq" id="XP_005257584.1">
    <molecule id="Q96A33-1"/>
    <property type="nucleotide sequence ID" value="XM_005257527.3"/>
</dbReference>
<dbReference type="RefSeq" id="XP_054172683.1">
    <molecule id="Q96A33-1"/>
    <property type="nucleotide sequence ID" value="XM_054316708.1"/>
</dbReference>
<dbReference type="PDB" id="6W6L">
    <property type="method" value="EM"/>
    <property type="resolution" value="3.84 A"/>
    <property type="chains" value="7=1-483"/>
</dbReference>
<dbReference type="PDBsum" id="6W6L"/>
<dbReference type="SMR" id="Q96A33"/>
<dbReference type="BioGRID" id="121318">
    <property type="interactions" value="493"/>
</dbReference>
<dbReference type="ComplexPortal" id="CPX-7020">
    <property type="entry name" value="PAT intramembrane chaperone complex"/>
</dbReference>
<dbReference type="CORUM" id="Q96A33"/>
<dbReference type="FunCoup" id="Q96A33">
    <property type="interactions" value="2382"/>
</dbReference>
<dbReference type="IntAct" id="Q96A33">
    <property type="interactions" value="321"/>
</dbReference>
<dbReference type="MINT" id="Q96A33"/>
<dbReference type="STRING" id="9606.ENSP00000225726"/>
<dbReference type="TCDB" id="8.A.142.1.1">
    <property type="family name" value="the pat intramembrane chaperone complex (pat) family"/>
</dbReference>
<dbReference type="GlyCosmos" id="Q96A33">
    <property type="glycosylation" value="1 site, No reported glycans"/>
</dbReference>
<dbReference type="GlyGen" id="Q96A33">
    <property type="glycosylation" value="4 sites, 1 N-linked glycan (1 site), 2 O-linked glycans (3 sites)"/>
</dbReference>
<dbReference type="iPTMnet" id="Q96A33"/>
<dbReference type="MetOSite" id="Q96A33"/>
<dbReference type="PhosphoSitePlus" id="Q96A33"/>
<dbReference type="SwissPalm" id="Q96A33"/>
<dbReference type="BioMuta" id="CCDC47"/>
<dbReference type="DMDM" id="74731083"/>
<dbReference type="jPOST" id="Q96A33"/>
<dbReference type="MassIVE" id="Q96A33"/>
<dbReference type="PaxDb" id="9606-ENSP00000225726"/>
<dbReference type="PeptideAtlas" id="Q96A33"/>
<dbReference type="ProteomicsDB" id="75902">
    <molecule id="Q96A33-1"/>
</dbReference>
<dbReference type="ProteomicsDB" id="75903">
    <molecule id="Q96A33-2"/>
</dbReference>
<dbReference type="Pumba" id="Q96A33"/>
<dbReference type="Antibodypedia" id="31338">
    <property type="antibodies" value="170 antibodies from 26 providers"/>
</dbReference>
<dbReference type="DNASU" id="57003"/>
<dbReference type="Ensembl" id="ENST00000225726.10">
    <molecule id="Q96A33-1"/>
    <property type="protein sequence ID" value="ENSP00000225726.5"/>
    <property type="gene ID" value="ENSG00000108588.15"/>
</dbReference>
<dbReference type="Ensembl" id="ENST00000403162.7">
    <molecule id="Q96A33-1"/>
    <property type="protein sequence ID" value="ENSP00000384888.3"/>
    <property type="gene ID" value="ENSG00000108588.15"/>
</dbReference>
<dbReference type="Ensembl" id="ENST00000582252.1">
    <molecule id="Q96A33-2"/>
    <property type="protein sequence ID" value="ENSP00000463577.1"/>
    <property type="gene ID" value="ENSG00000108588.15"/>
</dbReference>
<dbReference type="GeneID" id="57003"/>
<dbReference type="KEGG" id="hsa:57003"/>
<dbReference type="MANE-Select" id="ENST00000225726.10">
    <property type="protein sequence ID" value="ENSP00000225726.5"/>
    <property type="RefSeq nucleotide sequence ID" value="NM_020198.3"/>
    <property type="RefSeq protein sequence ID" value="NP_064583.2"/>
</dbReference>
<dbReference type="UCSC" id="uc002jbs.5">
    <molecule id="Q96A33-1"/>
    <property type="organism name" value="human"/>
</dbReference>
<dbReference type="AGR" id="HGNC:24856"/>
<dbReference type="CTD" id="57003"/>
<dbReference type="DisGeNET" id="57003"/>
<dbReference type="GeneCards" id="CCDC47"/>
<dbReference type="HGNC" id="HGNC:24856">
    <property type="gene designation" value="CCDC47"/>
</dbReference>
<dbReference type="HPA" id="ENSG00000108588">
    <property type="expression patterns" value="Low tissue specificity"/>
</dbReference>
<dbReference type="MalaCards" id="CCDC47"/>
<dbReference type="MIM" id="618260">
    <property type="type" value="gene"/>
</dbReference>
<dbReference type="MIM" id="618268">
    <property type="type" value="phenotype"/>
</dbReference>
<dbReference type="neXtProt" id="NX_Q96A33"/>
<dbReference type="OpenTargets" id="ENSG00000108588"/>
<dbReference type="PharmGKB" id="PA142672164"/>
<dbReference type="VEuPathDB" id="HostDB:ENSG00000108588"/>
<dbReference type="eggNOG" id="KOG2357">
    <property type="taxonomic scope" value="Eukaryota"/>
</dbReference>
<dbReference type="GeneTree" id="ENSGT00390000013997"/>
<dbReference type="HOGENOM" id="CLU_033196_1_0_1"/>
<dbReference type="InParanoid" id="Q96A33"/>
<dbReference type="OMA" id="MHLVRDM"/>
<dbReference type="OrthoDB" id="10039147at2759"/>
<dbReference type="PAN-GO" id="Q96A33">
    <property type="GO annotations" value="2 GO annotations based on evolutionary models"/>
</dbReference>
<dbReference type="PhylomeDB" id="Q96A33"/>
<dbReference type="TreeFam" id="TF314902"/>
<dbReference type="PathwayCommons" id="Q96A33"/>
<dbReference type="SignaLink" id="Q96A33"/>
<dbReference type="BioGRID-ORCS" id="57003">
    <property type="hits" value="53 hits in 1168 CRISPR screens"/>
</dbReference>
<dbReference type="ChiTaRS" id="CCDC47">
    <property type="organism name" value="human"/>
</dbReference>
<dbReference type="GenomeRNAi" id="57003"/>
<dbReference type="Pharos" id="Q96A33">
    <property type="development level" value="Tbio"/>
</dbReference>
<dbReference type="PRO" id="PR:Q96A33"/>
<dbReference type="Proteomes" id="UP000005640">
    <property type="component" value="Chromosome 17"/>
</dbReference>
<dbReference type="RNAct" id="Q96A33">
    <property type="molecule type" value="protein"/>
</dbReference>
<dbReference type="Bgee" id="ENSG00000108588">
    <property type="expression patterns" value="Expressed in calcaneal tendon and 196 other cell types or tissues"/>
</dbReference>
<dbReference type="ExpressionAtlas" id="Q96A33">
    <property type="expression patterns" value="baseline and differential"/>
</dbReference>
<dbReference type="GO" id="GO:0005783">
    <property type="term" value="C:endoplasmic reticulum"/>
    <property type="evidence" value="ECO:0000314"/>
    <property type="project" value="HPA"/>
</dbReference>
<dbReference type="GO" id="GO:0005789">
    <property type="term" value="C:endoplasmic reticulum membrane"/>
    <property type="evidence" value="ECO:0000314"/>
    <property type="project" value="UniProtKB"/>
</dbReference>
<dbReference type="GO" id="GO:0016020">
    <property type="term" value="C:membrane"/>
    <property type="evidence" value="ECO:0007005"/>
    <property type="project" value="UniProtKB"/>
</dbReference>
<dbReference type="GO" id="GO:0160064">
    <property type="term" value="C:multi-pass translocon complex"/>
    <property type="evidence" value="ECO:0000314"/>
    <property type="project" value="UniProtKB"/>
</dbReference>
<dbReference type="GO" id="GO:0101031">
    <property type="term" value="C:protein folding chaperone complex"/>
    <property type="evidence" value="ECO:0000353"/>
    <property type="project" value="ComplexPortal"/>
</dbReference>
<dbReference type="GO" id="GO:0030867">
    <property type="term" value="C:rough endoplasmic reticulum membrane"/>
    <property type="evidence" value="ECO:0007669"/>
    <property type="project" value="UniProtKB-SubCell"/>
</dbReference>
<dbReference type="GO" id="GO:0005509">
    <property type="term" value="F:calcium ion binding"/>
    <property type="evidence" value="ECO:0000318"/>
    <property type="project" value="GO_Central"/>
</dbReference>
<dbReference type="GO" id="GO:0044183">
    <property type="term" value="F:protein folding chaperone"/>
    <property type="evidence" value="ECO:0000314"/>
    <property type="project" value="UniProtKB"/>
</dbReference>
<dbReference type="GO" id="GO:0043022">
    <property type="term" value="F:ribosome binding"/>
    <property type="evidence" value="ECO:0000314"/>
    <property type="project" value="UniProtKB"/>
</dbReference>
<dbReference type="GO" id="GO:0003723">
    <property type="term" value="F:RNA binding"/>
    <property type="evidence" value="ECO:0007005"/>
    <property type="project" value="UniProtKB"/>
</dbReference>
<dbReference type="GO" id="GO:0032469">
    <property type="term" value="P:endoplasmic reticulum calcium ion homeostasis"/>
    <property type="evidence" value="ECO:0000315"/>
    <property type="project" value="UniProtKB"/>
</dbReference>
<dbReference type="GO" id="GO:0006983">
    <property type="term" value="P:ER overload response"/>
    <property type="evidence" value="ECO:0007669"/>
    <property type="project" value="Ensembl"/>
</dbReference>
<dbReference type="GO" id="GO:0036503">
    <property type="term" value="P:ERAD pathway"/>
    <property type="evidence" value="ECO:0000315"/>
    <property type="project" value="UniProtKB"/>
</dbReference>
<dbReference type="GO" id="GO:0160063">
    <property type="term" value="P:multi-pass transmembrane protein insertion into ER membrane"/>
    <property type="evidence" value="ECO:0000314"/>
    <property type="project" value="UniProtKB"/>
</dbReference>
<dbReference type="GO" id="GO:0001649">
    <property type="term" value="P:osteoblast differentiation"/>
    <property type="evidence" value="ECO:0007005"/>
    <property type="project" value="UniProtKB"/>
</dbReference>
<dbReference type="GO" id="GO:0009791">
    <property type="term" value="P:post-embryonic development"/>
    <property type="evidence" value="ECO:0007669"/>
    <property type="project" value="Ensembl"/>
</dbReference>
<dbReference type="GO" id="GO:0045048">
    <property type="term" value="P:protein insertion into ER membrane"/>
    <property type="evidence" value="ECO:0000314"/>
    <property type="project" value="UniProtKB"/>
</dbReference>
<dbReference type="InterPro" id="IPR012879">
    <property type="entry name" value="CCDC47"/>
</dbReference>
<dbReference type="PANTHER" id="PTHR12883">
    <property type="entry name" value="ADIPOCYTE-SPECIFIC PROTEIN 4-RELATED"/>
    <property type="match status" value="1"/>
</dbReference>
<dbReference type="PANTHER" id="PTHR12883:SF0">
    <property type="entry name" value="PAT COMPLEX SUBUNIT CCDC47"/>
    <property type="match status" value="1"/>
</dbReference>
<dbReference type="Pfam" id="PF07946">
    <property type="entry name" value="CCDC47"/>
    <property type="match status" value="1"/>
</dbReference>
<organism>
    <name type="scientific">Homo sapiens</name>
    <name type="common">Human</name>
    <dbReference type="NCBI Taxonomy" id="9606"/>
    <lineage>
        <taxon>Eukaryota</taxon>
        <taxon>Metazoa</taxon>
        <taxon>Chordata</taxon>
        <taxon>Craniata</taxon>
        <taxon>Vertebrata</taxon>
        <taxon>Euteleostomi</taxon>
        <taxon>Mammalia</taxon>
        <taxon>Eutheria</taxon>
        <taxon>Euarchontoglires</taxon>
        <taxon>Primates</taxon>
        <taxon>Haplorrhini</taxon>
        <taxon>Catarrhini</taxon>
        <taxon>Hominidae</taxon>
        <taxon>Homo</taxon>
    </lineage>
</organism>
<accession>Q96A33</accession>
<accession>B2RAS8</accession>
<accession>D3DU20</accession>
<accession>Q96D00</accession>
<accession>Q96JZ7</accession>
<accession>Q9H3E4</accession>
<accession>Q9NRG3</accession>
<sequence>MKAFHTFCVVLLVFGSVSEAKFDDFEDEEDIVEYDDNDFAEFEDVMEDSVTESPQRVIITEDDEDETTVELEGQDENQEGDFEDADTQEGDTESEPYDDEEFEGYEDKPDTSSSKNKDPITIVDVPAHLQNSWESYYLEILMVTGLLAYIMNYIIGKNKNSRLAQAWFNTHRELLESNFTLVGDDGTNKEATSTGKLNQENEHIYNLWCSGRVCCEGMLIQLRFLKRQDLLNVLARMMRPVSDQVQIKVTMNDEDMDTYVFAVGTRKALVRLQKEMQDLSEFCSDKPKSGAKYGLPDSLAILSEMGEVTDGMMDTKMVHFLTHYADKIESVHFSDQFSGPKIMQEEGQPLKLPDTKRTLLFTFNVPGSGNTYPKDMEALLPLMNMVIYSIDKAKKFRLNREGKQKADKNRARVEENFLKLTHVQRQEAAQSRREEKKRAEKERIMNEEDPEKQRRLEEAALRREQKKLEKKQMKMKQIKVKAM</sequence>
<proteinExistence type="evidence at protein level"/>
<name>CCD47_HUMAN</name>
<reference key="1">
    <citation type="submission" date="2000-01" db="EMBL/GenBank/DDBJ databases">
        <title>A novel gene expressed in human liver cancer tissue.</title>
        <authorList>
            <person name="Li Y."/>
            <person name="Wu T."/>
            <person name="Xu S."/>
            <person name="Ren S."/>
            <person name="Chen Z."/>
            <person name="Han Z."/>
        </authorList>
    </citation>
    <scope>NUCLEOTIDE SEQUENCE [LARGE SCALE MRNA] (ISOFORM 1)</scope>
    <source>
        <tissue>Liver cancer</tissue>
    </source>
</reference>
<reference key="2">
    <citation type="journal article" date="2004" name="Nat. Genet.">
        <title>Complete sequencing and characterization of 21,243 full-length human cDNAs.</title>
        <authorList>
            <person name="Ota T."/>
            <person name="Suzuki Y."/>
            <person name="Nishikawa T."/>
            <person name="Otsuki T."/>
            <person name="Sugiyama T."/>
            <person name="Irie R."/>
            <person name="Wakamatsu A."/>
            <person name="Hayashi K."/>
            <person name="Sato H."/>
            <person name="Nagai K."/>
            <person name="Kimura K."/>
            <person name="Makita H."/>
            <person name="Sekine M."/>
            <person name="Obayashi M."/>
            <person name="Nishi T."/>
            <person name="Shibahara T."/>
            <person name="Tanaka T."/>
            <person name="Ishii S."/>
            <person name="Yamamoto J."/>
            <person name="Saito K."/>
            <person name="Kawai Y."/>
            <person name="Isono Y."/>
            <person name="Nakamura Y."/>
            <person name="Nagahari K."/>
            <person name="Murakami K."/>
            <person name="Yasuda T."/>
            <person name="Iwayanagi T."/>
            <person name="Wagatsuma M."/>
            <person name="Shiratori A."/>
            <person name="Sudo H."/>
            <person name="Hosoiri T."/>
            <person name="Kaku Y."/>
            <person name="Kodaira H."/>
            <person name="Kondo H."/>
            <person name="Sugawara M."/>
            <person name="Takahashi M."/>
            <person name="Kanda K."/>
            <person name="Yokoi T."/>
            <person name="Furuya T."/>
            <person name="Kikkawa E."/>
            <person name="Omura Y."/>
            <person name="Abe K."/>
            <person name="Kamihara K."/>
            <person name="Katsuta N."/>
            <person name="Sato K."/>
            <person name="Tanikawa M."/>
            <person name="Yamazaki M."/>
            <person name="Ninomiya K."/>
            <person name="Ishibashi T."/>
            <person name="Yamashita H."/>
            <person name="Murakawa K."/>
            <person name="Fujimori K."/>
            <person name="Tanai H."/>
            <person name="Kimata M."/>
            <person name="Watanabe M."/>
            <person name="Hiraoka S."/>
            <person name="Chiba Y."/>
            <person name="Ishida S."/>
            <person name="Ono Y."/>
            <person name="Takiguchi S."/>
            <person name="Watanabe S."/>
            <person name="Yosida M."/>
            <person name="Hotuta T."/>
            <person name="Kusano J."/>
            <person name="Kanehori K."/>
            <person name="Takahashi-Fujii A."/>
            <person name="Hara H."/>
            <person name="Tanase T.-O."/>
            <person name="Nomura Y."/>
            <person name="Togiya S."/>
            <person name="Komai F."/>
            <person name="Hara R."/>
            <person name="Takeuchi K."/>
            <person name="Arita M."/>
            <person name="Imose N."/>
            <person name="Musashino K."/>
            <person name="Yuuki H."/>
            <person name="Oshima A."/>
            <person name="Sasaki N."/>
            <person name="Aotsuka S."/>
            <person name="Yoshikawa Y."/>
            <person name="Matsunawa H."/>
            <person name="Ichihara T."/>
            <person name="Shiohata N."/>
            <person name="Sano S."/>
            <person name="Moriya S."/>
            <person name="Momiyama H."/>
            <person name="Satoh N."/>
            <person name="Takami S."/>
            <person name="Terashima Y."/>
            <person name="Suzuki O."/>
            <person name="Nakagawa S."/>
            <person name="Senoh A."/>
            <person name="Mizoguchi H."/>
            <person name="Goto Y."/>
            <person name="Shimizu F."/>
            <person name="Wakebe H."/>
            <person name="Hishigaki H."/>
            <person name="Watanabe T."/>
            <person name="Sugiyama A."/>
            <person name="Takemoto M."/>
            <person name="Kawakami B."/>
            <person name="Yamazaki M."/>
            <person name="Watanabe K."/>
            <person name="Kumagai A."/>
            <person name="Itakura S."/>
            <person name="Fukuzumi Y."/>
            <person name="Fujimori Y."/>
            <person name="Komiyama M."/>
            <person name="Tashiro H."/>
            <person name="Tanigami A."/>
            <person name="Fujiwara T."/>
            <person name="Ono T."/>
            <person name="Yamada K."/>
            <person name="Fujii Y."/>
            <person name="Ozaki K."/>
            <person name="Hirao M."/>
            <person name="Ohmori Y."/>
            <person name="Kawabata A."/>
            <person name="Hikiji T."/>
            <person name="Kobatake N."/>
            <person name="Inagaki H."/>
            <person name="Ikema Y."/>
            <person name="Okamoto S."/>
            <person name="Okitani R."/>
            <person name="Kawakami T."/>
            <person name="Noguchi S."/>
            <person name="Itoh T."/>
            <person name="Shigeta K."/>
            <person name="Senba T."/>
            <person name="Matsumura K."/>
            <person name="Nakajima Y."/>
            <person name="Mizuno T."/>
            <person name="Morinaga M."/>
            <person name="Sasaki M."/>
            <person name="Togashi T."/>
            <person name="Oyama M."/>
            <person name="Hata H."/>
            <person name="Watanabe M."/>
            <person name="Komatsu T."/>
            <person name="Mizushima-Sugano J."/>
            <person name="Satoh T."/>
            <person name="Shirai Y."/>
            <person name="Takahashi Y."/>
            <person name="Nakagawa K."/>
            <person name="Okumura K."/>
            <person name="Nagase T."/>
            <person name="Nomura N."/>
            <person name="Kikuchi H."/>
            <person name="Masuho Y."/>
            <person name="Yamashita R."/>
            <person name="Nakai K."/>
            <person name="Yada T."/>
            <person name="Nakamura Y."/>
            <person name="Ohara O."/>
            <person name="Isogai T."/>
            <person name="Sugano S."/>
        </authorList>
    </citation>
    <scope>NUCLEOTIDE SEQUENCE [LARGE SCALE MRNA] (ISOFORMS 1 AND 2)</scope>
    <source>
        <tissue>Placenta</tissue>
    </source>
</reference>
<reference key="3">
    <citation type="journal article" date="2005" name="DNA Res.">
        <title>Signal sequence and keyword trap in silico for selection of full-length human cDNAs encoding secretion or membrane proteins from oligo-capped cDNA libraries.</title>
        <authorList>
            <person name="Otsuki T."/>
            <person name="Ota T."/>
            <person name="Nishikawa T."/>
            <person name="Hayashi K."/>
            <person name="Suzuki Y."/>
            <person name="Yamamoto J."/>
            <person name="Wakamatsu A."/>
            <person name="Kimura K."/>
            <person name="Sakamoto K."/>
            <person name="Hatano N."/>
            <person name="Kawai Y."/>
            <person name="Ishii S."/>
            <person name="Saito K."/>
            <person name="Kojima S."/>
            <person name="Sugiyama T."/>
            <person name="Ono T."/>
            <person name="Okano K."/>
            <person name="Yoshikawa Y."/>
            <person name="Aotsuka S."/>
            <person name="Sasaki N."/>
            <person name="Hattori A."/>
            <person name="Okumura K."/>
            <person name="Nagai K."/>
            <person name="Sugano S."/>
            <person name="Isogai T."/>
        </authorList>
    </citation>
    <scope>NUCLEOTIDE SEQUENCE [LARGE SCALE MRNA] (ISOFORM 1)</scope>
</reference>
<reference key="4">
    <citation type="submission" date="2005-09" db="EMBL/GenBank/DDBJ databases">
        <authorList>
            <person name="Mural R.J."/>
            <person name="Istrail S."/>
            <person name="Sutton G.G."/>
            <person name="Florea L."/>
            <person name="Halpern A.L."/>
            <person name="Mobarry C.M."/>
            <person name="Lippert R."/>
            <person name="Walenz B."/>
            <person name="Shatkay H."/>
            <person name="Dew I."/>
            <person name="Miller J.R."/>
            <person name="Flanigan M.J."/>
            <person name="Edwards N.J."/>
            <person name="Bolanos R."/>
            <person name="Fasulo D."/>
            <person name="Halldorsson B.V."/>
            <person name="Hannenhalli S."/>
            <person name="Turner R."/>
            <person name="Yooseph S."/>
            <person name="Lu F."/>
            <person name="Nusskern D.R."/>
            <person name="Shue B.C."/>
            <person name="Zheng X.H."/>
            <person name="Zhong F."/>
            <person name="Delcher A.L."/>
            <person name="Huson D.H."/>
            <person name="Kravitz S.A."/>
            <person name="Mouchard L."/>
            <person name="Reinert K."/>
            <person name="Remington K.A."/>
            <person name="Clark A.G."/>
            <person name="Waterman M.S."/>
            <person name="Eichler E.E."/>
            <person name="Adams M.D."/>
            <person name="Hunkapiller M.W."/>
            <person name="Myers E.W."/>
            <person name="Venter J.C."/>
        </authorList>
    </citation>
    <scope>NUCLEOTIDE SEQUENCE [LARGE SCALE GENOMIC DNA]</scope>
</reference>
<reference key="5">
    <citation type="journal article" date="2004" name="Genome Res.">
        <title>The status, quality, and expansion of the NIH full-length cDNA project: the Mammalian Gene Collection (MGC).</title>
        <authorList>
            <consortium name="The MGC Project Team"/>
        </authorList>
    </citation>
    <scope>NUCLEOTIDE SEQUENCE [LARGE SCALE MRNA] (ISOFORM 1)</scope>
    <source>
        <tissue>Lymph</tissue>
        <tissue>Ovary</tissue>
    </source>
</reference>
<reference key="6">
    <citation type="submission" date="1998-12" db="EMBL/GenBank/DDBJ databases">
        <authorList>
            <person name="Liu B."/>
            <person name="Liu Y.Q."/>
            <person name="Wang X.Y."/>
            <person name="Zhao B."/>
            <person name="Sheng H."/>
            <person name="Zhao X.W."/>
            <person name="Liu S."/>
            <person name="Xu Y.Y."/>
            <person name="Ye J."/>
            <person name="Song L."/>
            <person name="Gao Y."/>
            <person name="Zhang C.L."/>
            <person name="Zhang J."/>
            <person name="Wei Y.J."/>
            <person name="Cao H.Q."/>
            <person name="Zhao Y."/>
            <person name="Liu L.S."/>
            <person name="Ding J.F."/>
            <person name="Gao R.L."/>
            <person name="Wu Q.Y."/>
            <person name="Qiang B.Q."/>
            <person name="Yuan J.G."/>
            <person name="Liew C.C."/>
            <person name="Zhao M.S."/>
            <person name="Hui R.T."/>
        </authorList>
    </citation>
    <scope>NUCLEOTIDE SEQUENCE [LARGE SCALE MRNA] OF 107-483 (ISOFORM 1)</scope>
    <source>
        <tissue>Heart</tissue>
    </source>
</reference>
<reference key="7">
    <citation type="journal article" date="2011" name="BMC Syst. Biol.">
        <title>Initial characterization of the human central proteome.</title>
        <authorList>
            <person name="Burkard T.R."/>
            <person name="Planyavsky M."/>
            <person name="Kaupe I."/>
            <person name="Breitwieser F.P."/>
            <person name="Buerckstuemmer T."/>
            <person name="Bennett K.L."/>
            <person name="Superti-Furga G."/>
            <person name="Colinge J."/>
        </authorList>
    </citation>
    <scope>IDENTIFICATION BY MASS SPECTROMETRY [LARGE SCALE ANALYSIS]</scope>
</reference>
<reference key="8">
    <citation type="journal article" date="2014" name="Dev. Biol.">
        <title>Contribution of calumin to embryogenesis through participation in the endoplasmic reticulum-associated degradation activity.</title>
        <authorList>
            <person name="Yamamoto S."/>
            <person name="Yamazaki T."/>
            <person name="Komazaki S."/>
            <person name="Yamashita T."/>
            <person name="Osaki M."/>
            <person name="Matsubayashi M."/>
            <person name="Kidoya H."/>
            <person name="Takakura N."/>
            <person name="Yamazaki D."/>
            <person name="Kakizawa S."/>
        </authorList>
    </citation>
    <scope>FUNCTION</scope>
    <scope>SUBCELLULAR LOCATION</scope>
</reference>
<reference key="9">
    <citation type="journal article" date="2014" name="J. Proteomics">
        <title>An enzyme assisted RP-RPLC approach for in-depth analysis of human liver phosphoproteome.</title>
        <authorList>
            <person name="Bian Y."/>
            <person name="Song C."/>
            <person name="Cheng K."/>
            <person name="Dong M."/>
            <person name="Wang F."/>
            <person name="Huang J."/>
            <person name="Sun D."/>
            <person name="Wang L."/>
            <person name="Ye M."/>
            <person name="Zou H."/>
        </authorList>
    </citation>
    <scope>IDENTIFICATION BY MASS SPECTROMETRY [LARGE SCALE ANALYSIS]</scope>
    <source>
        <tissue>Liver</tissue>
    </source>
</reference>
<reference key="10">
    <citation type="journal article" date="2015" name="Proteomics">
        <title>N-terminome analysis of the human mitochondrial proteome.</title>
        <authorList>
            <person name="Vaca Jacome A.S."/>
            <person name="Rabilloud T."/>
            <person name="Schaeffer-Reiss C."/>
            <person name="Rompais M."/>
            <person name="Ayoub D."/>
            <person name="Lane L."/>
            <person name="Bairoch A."/>
            <person name="Van Dorsselaer A."/>
            <person name="Carapito C."/>
        </authorList>
    </citation>
    <scope>IDENTIFICATION BY MASS SPECTROMETRY [LARGE SCALE ANALYSIS]</scope>
</reference>
<reference key="11">
    <citation type="journal article" date="2020" name="Nature">
        <title>An intramembrane chaperone complex facilitates membrane protein biogenesis.</title>
        <authorList>
            <person name="Chitwood P.J."/>
            <person name="Hegde R.S."/>
        </authorList>
    </citation>
    <scope>FUNCTION</scope>
    <scope>SUBCELLULAR LOCATION</scope>
    <scope>INTERACTION WITH WDR83OS/ASTERIX</scope>
</reference>
<reference key="12">
    <citation type="journal article" date="2020" name="Elife">
        <title>An ER translocon for multi-pass membrane protein biogenesis.</title>
        <authorList>
            <person name="McGilvray P.T."/>
            <person name="Anghel S.A."/>
            <person name="Sundaram A."/>
            <person name="Zhong F."/>
            <person name="Trnka M.J."/>
            <person name="Fuller J.R."/>
            <person name="Hu H."/>
            <person name="Burlingame A.L."/>
            <person name="Keenan R.J."/>
        </authorList>
    </citation>
    <scope>STRUCTURE BY ELECTRON MICROSCOPY (3.8 ANGSTROMS) OF 52-239 IN COMPLEX WITH THE MULTI-PASS TRANSLOCON COMPLEX</scope>
    <scope>FUNCTION</scope>
    <scope>INTERACTION WITH TMCO1; TMEM147; NCLN; NOMO; SEC61A1; SEC61B AND SEC61G</scope>
</reference>
<reference key="13">
    <citation type="journal article" date="2022" name="Nature">
        <title>Substrate-driven assembly of a translocon for multipass membrane proteins.</title>
        <authorList>
            <person name="Sundaram A."/>
            <person name="Yamsek M."/>
            <person name="Zhong F."/>
            <person name="Hooda Y."/>
            <person name="Hegde R.S."/>
            <person name="Keenan R.J."/>
        </authorList>
    </citation>
    <scope>FUNCTION</scope>
    <scope>IDENTIFICATION IN THE MULTI-PASS TRANSLOCON COMPLEX</scope>
    <scope>SUBCELLULAR LOCATION</scope>
</reference>
<reference key="14">
    <citation type="journal article" date="2018" name="Am. J. Hum. Genet.">
        <title>Bi-allelic CCDC47 variants cause a disorder characterized by woolly hair, liver dysfunction, dysmorphic features, and global developmental delay.</title>
        <authorList>
            <person name="Morimoto M."/>
            <person name="Waller-Evans H."/>
            <person name="Ammous Z."/>
            <person name="Song X."/>
            <person name="Strauss K.A."/>
            <person name="Pehlivan D."/>
            <person name="Gonzaga-Jauregui C."/>
            <person name="Puffenberger E.G."/>
            <person name="Holst C.R."/>
            <person name="Karaca E."/>
            <person name="Brigatti K.W."/>
            <person name="Maguire E."/>
            <person name="Coban-Akdemir Z.H."/>
            <person name="Amagata A."/>
            <person name="Lau C.C."/>
            <person name="Chepa-Lotrea X."/>
            <person name="Macnamara E."/>
            <person name="Tos T."/>
            <person name="Isikay S."/>
            <person name="Nehrebecky M."/>
            <person name="Overton J.D."/>
            <person name="Klein M."/>
            <person name="Markello T.C."/>
            <person name="Posey J.E."/>
            <person name="Adams D.R."/>
            <person name="Lloyd-Evans E."/>
            <person name="Lupski J.R."/>
            <person name="Gahl W.A."/>
            <person name="Malicdan M.C.V."/>
        </authorList>
    </citation>
    <scope>FUNCTION</scope>
    <scope>SUBCELLULAR LOCATION</scope>
    <scope>INVOLVEMENT IN THNS</scope>
    <scope>VARIANTS THNS 271-ARG--MET-483 DEL AND 397-ARG--MET-483 DEL</scope>
    <scope>CHARACTERIZATION OF VARIANTS THNS 271-ARG--MET-483 DEL AND 397-ARG--MET-483 DEL</scope>
</reference>
<evidence type="ECO:0000250" key="1">
    <source>
        <dbReference type="UniProtKB" id="A0A8I3P7X4"/>
    </source>
</evidence>
<evidence type="ECO:0000250" key="2">
    <source>
        <dbReference type="UniProtKB" id="Q9D024"/>
    </source>
</evidence>
<evidence type="ECO:0000255" key="3"/>
<evidence type="ECO:0000256" key="4">
    <source>
        <dbReference type="SAM" id="MobiDB-lite"/>
    </source>
</evidence>
<evidence type="ECO:0000269" key="5">
    <source>
    </source>
</evidence>
<evidence type="ECO:0000269" key="6">
    <source>
    </source>
</evidence>
<evidence type="ECO:0000269" key="7">
    <source>
    </source>
</evidence>
<evidence type="ECO:0000269" key="8">
    <source>
    </source>
</evidence>
<evidence type="ECO:0000269" key="9">
    <source>
    </source>
</evidence>
<evidence type="ECO:0000303" key="10">
    <source>
    </source>
</evidence>
<evidence type="ECO:0000303" key="11">
    <source>
    </source>
</evidence>
<evidence type="ECO:0000303" key="12">
    <source>
    </source>
</evidence>
<evidence type="ECO:0000303" key="13">
    <source>
    </source>
</evidence>
<evidence type="ECO:0000305" key="14"/>
<evidence type="ECO:0000312" key="15">
    <source>
        <dbReference type="HGNC" id="HGNC:24856"/>
    </source>
</evidence>
<gene>
    <name evidence="12 15" type="primary">CCDC47</name>
    <name type="ORF">GK001</name>
    <name type="ORF">MSTP041</name>
    <name type="ORF">PSEC0077</name>
</gene>
<comment type="function">
    <text evidence="1 2 5 6 7 8 9">Component of the multi-pass translocon (MPT) complex that mediates insertion of multi-pass membrane proteins into the lipid bilayer of membranes (PubMed:32814900, PubMed:32820719, PubMed:36261522). The MPT complex takes over after the SEC61 complex: following membrane insertion of the first few transmembrane segments of proteins by the SEC61 complex, the MPT complex occludes the lateral gate of the SEC61 complex to promote insertion of subsequent transmembrane regions (PubMed:36261522). Within the MPT complex, the PAT subcomplex sequesters any highly polar regions in the transmembrane domains away from the non-polar membrane environment until they can be buried in the interior of the fully assembled protein (By similarity). Within the PAT subcomplex, CCDC47 occludes the lateral gate of the SEC61 complex (By similarity). Involved in the regulation of calcium ion homeostasis in the ER (PubMed:30401460). Required for proper protein degradation via the ERAD (ER-associated degradation) pathway (PubMed:25009997). Has an essential role in the maintenance of ER organization during embryogenesis (By similarity).</text>
</comment>
<comment type="subunit">
    <text evidence="2 7 8 9">Component of the PAT complex, composed of WDR83OS/Asterix and CCDC47 (PubMed:32814900, PubMed:36261522). The PAT complex is part of the multi-pass translocon (MPT) complex, composed of three subcomplexes, the GEL complex (composed of RAB5IF/OPTI and TMCO1), the BOS complex (composed of NCLN/Nicalin, NOMO and TMEM147) and the PAT complex (composed of WDR83OS/Asterix and CCDC47) (PubMed:32820719, PubMed:36261522). The MPT complex associates with the SEC61 complex (PubMed:32820719, PubMed:36261522). Interacts with VCP, HSPA5, DERL1, DERL2 and SELENOS (By similarity).</text>
</comment>
<comment type="interaction">
    <interactant intactId="EBI-720151">
        <id>Q96A33</id>
    </interactant>
    <interactant intactId="EBI-968267">
        <id>Q92985</id>
        <label>IRF7</label>
    </interactant>
    <organismsDiffer>false</organismsDiffer>
    <experiments>2</experiments>
</comment>
<comment type="interaction">
    <interactant intactId="EBI-720151">
        <id>Q96A33</id>
    </interactant>
    <interactant intactId="EBI-399080">
        <id>Q92993</id>
        <label>KAT5</label>
    </interactant>
    <organismsDiffer>false</organismsDiffer>
    <experiments>3</experiments>
</comment>
<comment type="interaction">
    <interactant intactId="EBI-720151">
        <id>Q96A33</id>
    </interactant>
    <interactant intactId="EBI-11742507">
        <id>Q8TAP4-4</id>
        <label>LMO3</label>
    </interactant>
    <organismsDiffer>false</organismsDiffer>
    <experiments>3</experiments>
</comment>
<comment type="interaction">
    <interactant intactId="EBI-720151">
        <id>Q96A33</id>
    </interactant>
    <interactant intactId="EBI-1383528">
        <id>P17252</id>
        <label>PRKCA</label>
    </interactant>
    <organismsDiffer>false</organismsDiffer>
    <experiments>3</experiments>
</comment>
<comment type="interaction">
    <interactant intactId="EBI-720151">
        <id>Q96A33</id>
    </interactant>
    <interactant intactId="EBI-9090795">
        <id>Q15047-2</id>
        <label>SETDB1</label>
    </interactant>
    <organismsDiffer>false</organismsDiffer>
    <experiments>3</experiments>
</comment>
<comment type="interaction">
    <interactant intactId="EBI-720151">
        <id>Q96A33</id>
    </interactant>
    <interactant intactId="EBI-2800345">
        <id>Q86WV6</id>
        <label>STING1</label>
    </interactant>
    <organismsDiffer>false</organismsDiffer>
    <experiments>2</experiments>
</comment>
<comment type="interaction">
    <interactant intactId="EBI-720151">
        <id>Q96A33</id>
    </interactant>
    <interactant intactId="EBI-528644">
        <id>P58753</id>
        <label>TIRAP</label>
    </interactant>
    <organismsDiffer>false</organismsDiffer>
    <experiments>2</experiments>
</comment>
<comment type="interaction">
    <interactant intactId="EBI-720151">
        <id>Q96A33</id>
    </interactant>
    <interactant intactId="EBI-6309120">
        <id>Q9Y284</id>
        <label>WDR83OS</label>
    </interactant>
    <organismsDiffer>false</organismsDiffer>
    <experiments>3</experiments>
</comment>
<comment type="interaction">
    <interactant intactId="EBI-720151">
        <id>Q96A33</id>
    </interactant>
    <interactant intactId="EBI-359832">
        <id>P61981</id>
        <label>YWHAG</label>
    </interactant>
    <organismsDiffer>false</organismsDiffer>
    <experiments>3</experiments>
</comment>
<comment type="interaction">
    <interactant intactId="EBI-720151">
        <id>Q96A33</id>
    </interactant>
    <interactant intactId="EBI-6117042">
        <id>Q99J34</id>
        <label>Irak1</label>
    </interactant>
    <organismsDiffer>true</organismsDiffer>
    <experiments>2</experiments>
</comment>
<comment type="interaction">
    <interactant intactId="EBI-720151">
        <id>Q96A33</id>
    </interactant>
    <interactant intactId="EBI-6117196">
        <id>Q6PDS3</id>
        <label>Sarm1</label>
    </interactant>
    <organismsDiffer>true</organismsDiffer>
    <experiments>2</experiments>
</comment>
<comment type="subcellular location">
    <subcellularLocation>
        <location evidence="5 6 7">Endoplasmic reticulum membrane</location>
        <topology evidence="3">Single-pass type I membrane protein</topology>
    </subcellularLocation>
    <subcellularLocation>
        <location evidence="2">Rough endoplasmic reticulum membrane</location>
        <topology evidence="3">Single-pass type I membrane protein</topology>
    </subcellularLocation>
</comment>
<comment type="alternative products">
    <event type="alternative splicing"/>
    <isoform>
        <id>Q96A33-1</id>
        <name>1</name>
        <sequence type="displayed"/>
    </isoform>
    <isoform>
        <id>Q96A33-2</id>
        <name>2</name>
        <sequence type="described" ref="VSP_018478"/>
    </isoform>
</comment>
<comment type="disease" evidence="6">
    <disease id="DI-05454">
        <name>Trichohepatoneurodevelopmental syndrome</name>
        <acronym>THNS</acronym>
        <description>An autosomal recessive complex multisystem disorder characterized by woolly or coarse hair, liver dysfunction, pruritus, dysmorphic features, hypotonia, and global developmental delay.</description>
        <dbReference type="MIM" id="618268"/>
    </disease>
    <text>The disease is caused by variants affecting the gene represented in this entry.</text>
</comment>
<comment type="similarity">
    <text evidence="14">Belongs to the CCDC47 family.</text>
</comment>
<comment type="sequence caution" evidence="14">
    <conflict type="frameshift">
        <sequence resource="EMBL-CDS" id="AAG39292"/>
    </conflict>
</comment>
<feature type="signal peptide" evidence="3">
    <location>
        <begin position="1"/>
        <end position="20"/>
    </location>
</feature>
<feature type="chain" id="PRO_0000235797" description="PAT complex subunit CCDC47">
    <location>
        <begin position="21"/>
        <end position="483"/>
    </location>
</feature>
<feature type="topological domain" description="Cytoplasmic" evidence="1">
    <location>
        <begin position="21"/>
        <end position="135"/>
    </location>
</feature>
<feature type="transmembrane region" description="Helical" evidence="3">
    <location>
        <begin position="136"/>
        <end position="155"/>
    </location>
</feature>
<feature type="topological domain" description="Lumenal" evidence="1">
    <location>
        <begin position="156"/>
        <end position="483"/>
    </location>
</feature>
<feature type="region of interest" description="Disordered" evidence="4">
    <location>
        <begin position="46"/>
        <end position="118"/>
    </location>
</feature>
<feature type="region of interest" description="Disordered" evidence="4">
    <location>
        <begin position="424"/>
        <end position="483"/>
    </location>
</feature>
<feature type="coiled-coil region" evidence="3">
    <location>
        <begin position="450"/>
        <end position="483"/>
    </location>
</feature>
<feature type="compositionally biased region" description="Acidic residues" evidence="4">
    <location>
        <begin position="60"/>
        <end position="104"/>
    </location>
</feature>
<feature type="compositionally biased region" description="Basic and acidic residues" evidence="4">
    <location>
        <begin position="105"/>
        <end position="118"/>
    </location>
</feature>
<feature type="compositionally biased region" description="Basic and acidic residues" evidence="4">
    <location>
        <begin position="430"/>
        <end position="472"/>
    </location>
</feature>
<feature type="compositionally biased region" description="Basic residues" evidence="4">
    <location>
        <begin position="473"/>
        <end position="483"/>
    </location>
</feature>
<feature type="glycosylation site" description="N-linked (GlcNAc...) asparagine" evidence="3">
    <location>
        <position position="178"/>
    </location>
</feature>
<feature type="splice variant" id="VSP_018478" description="In isoform 2." evidence="10">
    <original>EAALRREQKKLEKKQMKMKQIKVKAM</original>
    <variation>VRQTYHWGKTTICKDDCLCSVGC</variation>
    <location>
        <begin position="458"/>
        <end position="483"/>
    </location>
</feature>
<feature type="sequence variant" id="VAR_081926" description="In THNS; loss-of-function variant affecting ER calcium ion homeostasis in patient cells; no protein detected by Western blot in patient cells." evidence="6">
    <location>
        <begin position="271"/>
        <end position="483"/>
    </location>
</feature>
<feature type="sequence variant" id="VAR_081927" description="In THNS; loss-of-function variant affecting ER calcium ion homeostasis in patient cells; no protein detected by Western blot in patient cells." evidence="6">
    <location>
        <begin position="397"/>
        <end position="483"/>
    </location>
</feature>
<feature type="sequence conflict" description="In Ref. 1; AAF86954." evidence="14" ref="1">
    <original>EQ</original>
    <variation>AK</variation>
    <location>
        <begin position="464"/>
        <end position="465"/>
    </location>
</feature>
<protein>
    <recommendedName>
        <fullName evidence="13">PAT complex subunit CCDC47</fullName>
    </recommendedName>
    <alternativeName>
        <fullName evidence="11 12">Calumin</fullName>
    </alternativeName>
    <alternativeName>
        <fullName evidence="14">Coiled-coil domain-containing protein 47</fullName>
    </alternativeName>
</protein>
<keyword id="KW-0002">3D-structure</keyword>
<keyword id="KW-0025">Alternative splicing</keyword>
<keyword id="KW-0143">Chaperone</keyword>
<keyword id="KW-0175">Coiled coil</keyword>
<keyword id="KW-0225">Disease variant</keyword>
<keyword id="KW-0256">Endoplasmic reticulum</keyword>
<keyword id="KW-0325">Glycoprotein</keyword>
<keyword id="KW-0472">Membrane</keyword>
<keyword id="KW-1267">Proteomics identification</keyword>
<keyword id="KW-1185">Reference proteome</keyword>
<keyword id="KW-0732">Signal</keyword>
<keyword id="KW-0812">Transmembrane</keyword>
<keyword id="KW-1133">Transmembrane helix</keyword>